<accession>Q0I677</accession>
<evidence type="ECO:0000255" key="1">
    <source>
        <dbReference type="HAMAP-Rule" id="MF_01227"/>
    </source>
</evidence>
<evidence type="ECO:0000256" key="2">
    <source>
        <dbReference type="SAM" id="MobiDB-lite"/>
    </source>
</evidence>
<dbReference type="EC" id="6.3.4.2" evidence="1"/>
<dbReference type="EMBL" id="CP000435">
    <property type="protein sequence ID" value="ABI45206.1"/>
    <property type="molecule type" value="Genomic_DNA"/>
</dbReference>
<dbReference type="RefSeq" id="WP_011620745.1">
    <property type="nucleotide sequence ID" value="NC_008319.1"/>
</dbReference>
<dbReference type="SMR" id="Q0I677"/>
<dbReference type="STRING" id="64471.sync_2858"/>
<dbReference type="KEGG" id="syg:sync_2858"/>
<dbReference type="eggNOG" id="COG0504">
    <property type="taxonomic scope" value="Bacteria"/>
</dbReference>
<dbReference type="HOGENOM" id="CLU_011675_5_0_3"/>
<dbReference type="OrthoDB" id="9801107at2"/>
<dbReference type="UniPathway" id="UPA00159">
    <property type="reaction ID" value="UER00277"/>
</dbReference>
<dbReference type="Proteomes" id="UP000001961">
    <property type="component" value="Chromosome"/>
</dbReference>
<dbReference type="GO" id="GO:0005829">
    <property type="term" value="C:cytosol"/>
    <property type="evidence" value="ECO:0007669"/>
    <property type="project" value="TreeGrafter"/>
</dbReference>
<dbReference type="GO" id="GO:0005524">
    <property type="term" value="F:ATP binding"/>
    <property type="evidence" value="ECO:0007669"/>
    <property type="project" value="UniProtKB-KW"/>
</dbReference>
<dbReference type="GO" id="GO:0003883">
    <property type="term" value="F:CTP synthase activity"/>
    <property type="evidence" value="ECO:0007669"/>
    <property type="project" value="UniProtKB-UniRule"/>
</dbReference>
<dbReference type="GO" id="GO:0004359">
    <property type="term" value="F:glutaminase activity"/>
    <property type="evidence" value="ECO:0007669"/>
    <property type="project" value="RHEA"/>
</dbReference>
<dbReference type="GO" id="GO:0042802">
    <property type="term" value="F:identical protein binding"/>
    <property type="evidence" value="ECO:0007669"/>
    <property type="project" value="TreeGrafter"/>
</dbReference>
<dbReference type="GO" id="GO:0046872">
    <property type="term" value="F:metal ion binding"/>
    <property type="evidence" value="ECO:0007669"/>
    <property type="project" value="UniProtKB-KW"/>
</dbReference>
<dbReference type="GO" id="GO:0044210">
    <property type="term" value="P:'de novo' CTP biosynthetic process"/>
    <property type="evidence" value="ECO:0007669"/>
    <property type="project" value="UniProtKB-UniRule"/>
</dbReference>
<dbReference type="GO" id="GO:0019856">
    <property type="term" value="P:pyrimidine nucleobase biosynthetic process"/>
    <property type="evidence" value="ECO:0007669"/>
    <property type="project" value="TreeGrafter"/>
</dbReference>
<dbReference type="CDD" id="cd03113">
    <property type="entry name" value="CTPS_N"/>
    <property type="match status" value="1"/>
</dbReference>
<dbReference type="CDD" id="cd01746">
    <property type="entry name" value="GATase1_CTP_Synthase"/>
    <property type="match status" value="1"/>
</dbReference>
<dbReference type="FunFam" id="3.40.50.300:FF:000009">
    <property type="entry name" value="CTP synthase"/>
    <property type="match status" value="1"/>
</dbReference>
<dbReference type="FunFam" id="3.40.50.880:FF:000002">
    <property type="entry name" value="CTP synthase"/>
    <property type="match status" value="1"/>
</dbReference>
<dbReference type="Gene3D" id="3.40.50.880">
    <property type="match status" value="1"/>
</dbReference>
<dbReference type="Gene3D" id="3.40.50.300">
    <property type="entry name" value="P-loop containing nucleotide triphosphate hydrolases"/>
    <property type="match status" value="1"/>
</dbReference>
<dbReference type="HAMAP" id="MF_01227">
    <property type="entry name" value="PyrG"/>
    <property type="match status" value="1"/>
</dbReference>
<dbReference type="InterPro" id="IPR029062">
    <property type="entry name" value="Class_I_gatase-like"/>
</dbReference>
<dbReference type="InterPro" id="IPR004468">
    <property type="entry name" value="CTP_synthase"/>
</dbReference>
<dbReference type="InterPro" id="IPR017456">
    <property type="entry name" value="CTP_synthase_N"/>
</dbReference>
<dbReference type="InterPro" id="IPR017926">
    <property type="entry name" value="GATASE"/>
</dbReference>
<dbReference type="InterPro" id="IPR033828">
    <property type="entry name" value="GATase1_CTP_Synthase"/>
</dbReference>
<dbReference type="InterPro" id="IPR027417">
    <property type="entry name" value="P-loop_NTPase"/>
</dbReference>
<dbReference type="NCBIfam" id="NF003792">
    <property type="entry name" value="PRK05380.1"/>
    <property type="match status" value="1"/>
</dbReference>
<dbReference type="NCBIfam" id="TIGR00337">
    <property type="entry name" value="PyrG"/>
    <property type="match status" value="1"/>
</dbReference>
<dbReference type="PANTHER" id="PTHR11550">
    <property type="entry name" value="CTP SYNTHASE"/>
    <property type="match status" value="1"/>
</dbReference>
<dbReference type="PANTHER" id="PTHR11550:SF0">
    <property type="entry name" value="CTP SYNTHASE-RELATED"/>
    <property type="match status" value="1"/>
</dbReference>
<dbReference type="Pfam" id="PF06418">
    <property type="entry name" value="CTP_synth_N"/>
    <property type="match status" value="1"/>
</dbReference>
<dbReference type="Pfam" id="PF00117">
    <property type="entry name" value="GATase"/>
    <property type="match status" value="1"/>
</dbReference>
<dbReference type="SUPFAM" id="SSF52317">
    <property type="entry name" value="Class I glutamine amidotransferase-like"/>
    <property type="match status" value="1"/>
</dbReference>
<dbReference type="SUPFAM" id="SSF52540">
    <property type="entry name" value="P-loop containing nucleoside triphosphate hydrolases"/>
    <property type="match status" value="1"/>
</dbReference>
<dbReference type="PROSITE" id="PS51273">
    <property type="entry name" value="GATASE_TYPE_1"/>
    <property type="match status" value="1"/>
</dbReference>
<proteinExistence type="inferred from homology"/>
<reference key="1">
    <citation type="journal article" date="2006" name="Proc. Natl. Acad. Sci. U.S.A.">
        <title>Genome sequence of Synechococcus CC9311: insights into adaptation to a coastal environment.</title>
        <authorList>
            <person name="Palenik B."/>
            <person name="Ren Q."/>
            <person name="Dupont C.L."/>
            <person name="Myers G.S."/>
            <person name="Heidelberg J.F."/>
            <person name="Badger J.H."/>
            <person name="Madupu R."/>
            <person name="Nelson W.C."/>
            <person name="Brinkac L.M."/>
            <person name="Dodson R.J."/>
            <person name="Durkin A.S."/>
            <person name="Daugherty S.C."/>
            <person name="Sullivan S.A."/>
            <person name="Khouri H."/>
            <person name="Mohamoud Y."/>
            <person name="Halpin R."/>
            <person name="Paulsen I.T."/>
        </authorList>
    </citation>
    <scope>NUCLEOTIDE SEQUENCE [LARGE SCALE GENOMIC DNA]</scope>
    <source>
        <strain>CC9311</strain>
    </source>
</reference>
<feature type="chain" id="PRO_0000266241" description="CTP synthase">
    <location>
        <begin position="1"/>
        <end position="557"/>
    </location>
</feature>
<feature type="domain" description="Glutamine amidotransferase type-1" evidence="1">
    <location>
        <begin position="292"/>
        <end position="534"/>
    </location>
</feature>
<feature type="region of interest" description="Amidoligase domain" evidence="1">
    <location>
        <begin position="1"/>
        <end position="267"/>
    </location>
</feature>
<feature type="region of interest" description="Disordered" evidence="2">
    <location>
        <begin position="532"/>
        <end position="557"/>
    </location>
</feature>
<feature type="compositionally biased region" description="Polar residues" evidence="2">
    <location>
        <begin position="540"/>
        <end position="557"/>
    </location>
</feature>
<feature type="active site" description="Nucleophile; for glutamine hydrolysis" evidence="1">
    <location>
        <position position="381"/>
    </location>
</feature>
<feature type="active site" evidence="1">
    <location>
        <position position="507"/>
    </location>
</feature>
<feature type="active site" evidence="1">
    <location>
        <position position="509"/>
    </location>
</feature>
<feature type="binding site" evidence="1">
    <location>
        <position position="13"/>
    </location>
    <ligand>
        <name>CTP</name>
        <dbReference type="ChEBI" id="CHEBI:37563"/>
        <note>allosteric inhibitor</note>
    </ligand>
</feature>
<feature type="binding site" evidence="1">
    <location>
        <position position="13"/>
    </location>
    <ligand>
        <name>UTP</name>
        <dbReference type="ChEBI" id="CHEBI:46398"/>
    </ligand>
</feature>
<feature type="binding site" evidence="1">
    <location>
        <begin position="14"/>
        <end position="19"/>
    </location>
    <ligand>
        <name>ATP</name>
        <dbReference type="ChEBI" id="CHEBI:30616"/>
    </ligand>
</feature>
<feature type="binding site" evidence="1">
    <location>
        <position position="71"/>
    </location>
    <ligand>
        <name>ATP</name>
        <dbReference type="ChEBI" id="CHEBI:30616"/>
    </ligand>
</feature>
<feature type="binding site" evidence="1">
    <location>
        <position position="71"/>
    </location>
    <ligand>
        <name>Mg(2+)</name>
        <dbReference type="ChEBI" id="CHEBI:18420"/>
    </ligand>
</feature>
<feature type="binding site" evidence="1">
    <location>
        <position position="141"/>
    </location>
    <ligand>
        <name>Mg(2+)</name>
        <dbReference type="ChEBI" id="CHEBI:18420"/>
    </ligand>
</feature>
<feature type="binding site" evidence="1">
    <location>
        <begin position="148"/>
        <end position="150"/>
    </location>
    <ligand>
        <name>CTP</name>
        <dbReference type="ChEBI" id="CHEBI:37563"/>
        <note>allosteric inhibitor</note>
    </ligand>
</feature>
<feature type="binding site" evidence="1">
    <location>
        <begin position="188"/>
        <end position="193"/>
    </location>
    <ligand>
        <name>CTP</name>
        <dbReference type="ChEBI" id="CHEBI:37563"/>
        <note>allosteric inhibitor</note>
    </ligand>
</feature>
<feature type="binding site" evidence="1">
    <location>
        <begin position="188"/>
        <end position="193"/>
    </location>
    <ligand>
        <name>UTP</name>
        <dbReference type="ChEBI" id="CHEBI:46398"/>
    </ligand>
</feature>
<feature type="binding site" evidence="1">
    <location>
        <position position="224"/>
    </location>
    <ligand>
        <name>CTP</name>
        <dbReference type="ChEBI" id="CHEBI:37563"/>
        <note>allosteric inhibitor</note>
    </ligand>
</feature>
<feature type="binding site" evidence="1">
    <location>
        <position position="224"/>
    </location>
    <ligand>
        <name>UTP</name>
        <dbReference type="ChEBI" id="CHEBI:46398"/>
    </ligand>
</feature>
<feature type="binding site" evidence="1">
    <location>
        <position position="354"/>
    </location>
    <ligand>
        <name>L-glutamine</name>
        <dbReference type="ChEBI" id="CHEBI:58359"/>
    </ligand>
</feature>
<feature type="binding site" evidence="1">
    <location>
        <begin position="382"/>
        <end position="385"/>
    </location>
    <ligand>
        <name>L-glutamine</name>
        <dbReference type="ChEBI" id="CHEBI:58359"/>
    </ligand>
</feature>
<feature type="binding site" evidence="1">
    <location>
        <position position="405"/>
    </location>
    <ligand>
        <name>L-glutamine</name>
        <dbReference type="ChEBI" id="CHEBI:58359"/>
    </ligand>
</feature>
<feature type="binding site" evidence="1">
    <location>
        <position position="462"/>
    </location>
    <ligand>
        <name>L-glutamine</name>
        <dbReference type="ChEBI" id="CHEBI:58359"/>
    </ligand>
</feature>
<name>PYRG_SYNS3</name>
<sequence length="557" mass="61005">MAKFVFVTGGVVSSIGKGIVAASLGRLLKSRGYSVSILKLDPYLNVDPGTMSPFQHGEVFVTEDGAETDLDLGHYERFTDTAMSRLNSVTTGSIYQSVINKERRGSYNGGTVQVIPHITGEIRDRIHRVASNSNADVVITEIGGTVGDIESLPFLEAIREFRGDVGRQDLAYIHVTLLPFIGTSGELKTKPTQHSVKELRSIGIQPDLLVCRSDRDINDELKRKIGGFCGVPQRAVIPSLDADSIYAVPLTLEDEGLCREVLDVLDLEDHDSDMVDWAQLVHKLRNPGPAVKVALVGKYVQLNDAYLSVVEALRHACLAQDASLDLHWVCAEEIENQGADVLLKGMDAVVVPGGFGNRGVDGKVAAIRWAREQRVPFLGLCLGMQCAVIEWARNLAGLTDATSAELEPGTTHPVIHLLPEQQDVVDLGGTMRLGVYPCRVSAGSLASRLYGEEVVYERHRHRFEFNNAYRNLFLESGYEISGSSPDGRLVELIELPEHPFFTACQYHPEFLSRPGRPHPLFRGLIEAAQQRLPCSPSEAMRQQNNSAAGSSHPSLQP</sequence>
<organism>
    <name type="scientific">Synechococcus sp. (strain CC9311)</name>
    <dbReference type="NCBI Taxonomy" id="64471"/>
    <lineage>
        <taxon>Bacteria</taxon>
        <taxon>Bacillati</taxon>
        <taxon>Cyanobacteriota</taxon>
        <taxon>Cyanophyceae</taxon>
        <taxon>Synechococcales</taxon>
        <taxon>Synechococcaceae</taxon>
        <taxon>Synechococcus</taxon>
    </lineage>
</organism>
<protein>
    <recommendedName>
        <fullName evidence="1">CTP synthase</fullName>
        <ecNumber evidence="1">6.3.4.2</ecNumber>
    </recommendedName>
    <alternativeName>
        <fullName evidence="1">Cytidine 5'-triphosphate synthase</fullName>
    </alternativeName>
    <alternativeName>
        <fullName evidence="1">Cytidine triphosphate synthetase</fullName>
        <shortName evidence="1">CTP synthetase</shortName>
        <shortName evidence="1">CTPS</shortName>
    </alternativeName>
    <alternativeName>
        <fullName evidence="1">UTP--ammonia ligase</fullName>
    </alternativeName>
</protein>
<gene>
    <name evidence="1" type="primary">pyrG</name>
    <name type="ordered locus">sync_2858</name>
</gene>
<keyword id="KW-0067">ATP-binding</keyword>
<keyword id="KW-0315">Glutamine amidotransferase</keyword>
<keyword id="KW-0436">Ligase</keyword>
<keyword id="KW-0460">Magnesium</keyword>
<keyword id="KW-0479">Metal-binding</keyword>
<keyword id="KW-0547">Nucleotide-binding</keyword>
<keyword id="KW-0665">Pyrimidine biosynthesis</keyword>
<keyword id="KW-1185">Reference proteome</keyword>
<comment type="function">
    <text evidence="1">Catalyzes the ATP-dependent amination of UTP to CTP with either L-glutamine or ammonia as the source of nitrogen. Regulates intracellular CTP levels through interactions with the four ribonucleotide triphosphates.</text>
</comment>
<comment type="catalytic activity">
    <reaction evidence="1">
        <text>UTP + L-glutamine + ATP + H2O = CTP + L-glutamate + ADP + phosphate + 2 H(+)</text>
        <dbReference type="Rhea" id="RHEA:26426"/>
        <dbReference type="ChEBI" id="CHEBI:15377"/>
        <dbReference type="ChEBI" id="CHEBI:15378"/>
        <dbReference type="ChEBI" id="CHEBI:29985"/>
        <dbReference type="ChEBI" id="CHEBI:30616"/>
        <dbReference type="ChEBI" id="CHEBI:37563"/>
        <dbReference type="ChEBI" id="CHEBI:43474"/>
        <dbReference type="ChEBI" id="CHEBI:46398"/>
        <dbReference type="ChEBI" id="CHEBI:58359"/>
        <dbReference type="ChEBI" id="CHEBI:456216"/>
        <dbReference type="EC" id="6.3.4.2"/>
    </reaction>
</comment>
<comment type="catalytic activity">
    <reaction evidence="1">
        <text>L-glutamine + H2O = L-glutamate + NH4(+)</text>
        <dbReference type="Rhea" id="RHEA:15889"/>
        <dbReference type="ChEBI" id="CHEBI:15377"/>
        <dbReference type="ChEBI" id="CHEBI:28938"/>
        <dbReference type="ChEBI" id="CHEBI:29985"/>
        <dbReference type="ChEBI" id="CHEBI:58359"/>
    </reaction>
</comment>
<comment type="catalytic activity">
    <reaction evidence="1">
        <text>UTP + NH4(+) + ATP = CTP + ADP + phosphate + 2 H(+)</text>
        <dbReference type="Rhea" id="RHEA:16597"/>
        <dbReference type="ChEBI" id="CHEBI:15378"/>
        <dbReference type="ChEBI" id="CHEBI:28938"/>
        <dbReference type="ChEBI" id="CHEBI:30616"/>
        <dbReference type="ChEBI" id="CHEBI:37563"/>
        <dbReference type="ChEBI" id="CHEBI:43474"/>
        <dbReference type="ChEBI" id="CHEBI:46398"/>
        <dbReference type="ChEBI" id="CHEBI:456216"/>
    </reaction>
</comment>
<comment type="activity regulation">
    <text evidence="1">Allosterically activated by GTP, when glutamine is the substrate; GTP has no effect on the reaction when ammonia is the substrate. The allosteric effector GTP functions by stabilizing the protein conformation that binds the tetrahedral intermediate(s) formed during glutamine hydrolysis. Inhibited by the product CTP, via allosteric rather than competitive inhibition.</text>
</comment>
<comment type="pathway">
    <text evidence="1">Pyrimidine metabolism; CTP biosynthesis via de novo pathway; CTP from UDP: step 2/2.</text>
</comment>
<comment type="subunit">
    <text evidence="1">Homotetramer.</text>
</comment>
<comment type="miscellaneous">
    <text evidence="1">CTPSs have evolved a hybrid strategy for distinguishing between UTP and CTP. The overlapping regions of the product feedback inhibitory and substrate sites recognize a common feature in both compounds, the triphosphate moiety. To differentiate isosteric substrate and product pyrimidine rings, an additional pocket far from the expected kinase/ligase catalytic site, specifically recognizes the cytosine and ribose portions of the product inhibitor.</text>
</comment>
<comment type="similarity">
    <text evidence="1">Belongs to the CTP synthase family.</text>
</comment>